<dbReference type="EMBL" id="LT708304">
    <property type="protein sequence ID" value="SIT99940.1"/>
    <property type="molecule type" value="Genomic_DNA"/>
</dbReference>
<dbReference type="RefSeq" id="NP_854991.1">
    <property type="nucleotide sequence ID" value="NC_002945.3"/>
</dbReference>
<dbReference type="RefSeq" id="WP_003406686.1">
    <property type="nucleotide sequence ID" value="NC_002945.4"/>
</dbReference>
<dbReference type="SMR" id="P63692"/>
<dbReference type="KEGG" id="mbo:BQ2027_MB1337"/>
<dbReference type="PATRIC" id="fig|233413.5.peg.1466"/>
<dbReference type="Proteomes" id="UP000001419">
    <property type="component" value="Chromosome"/>
</dbReference>
<dbReference type="GO" id="GO:0005886">
    <property type="term" value="C:plasma membrane"/>
    <property type="evidence" value="ECO:0007669"/>
    <property type="project" value="UniProtKB-SubCell"/>
</dbReference>
<dbReference type="GO" id="GO:0045259">
    <property type="term" value="C:proton-transporting ATP synthase complex"/>
    <property type="evidence" value="ECO:0007669"/>
    <property type="project" value="UniProtKB-KW"/>
</dbReference>
<dbReference type="GO" id="GO:0033177">
    <property type="term" value="C:proton-transporting two-sector ATPase complex, proton-transporting domain"/>
    <property type="evidence" value="ECO:0007669"/>
    <property type="project" value="InterPro"/>
</dbReference>
<dbReference type="GO" id="GO:0008289">
    <property type="term" value="F:lipid binding"/>
    <property type="evidence" value="ECO:0007669"/>
    <property type="project" value="UniProtKB-KW"/>
</dbReference>
<dbReference type="GO" id="GO:0046933">
    <property type="term" value="F:proton-transporting ATP synthase activity, rotational mechanism"/>
    <property type="evidence" value="ECO:0007669"/>
    <property type="project" value="UniProtKB-UniRule"/>
</dbReference>
<dbReference type="CDD" id="cd18185">
    <property type="entry name" value="ATP-synt_Fo_c_ATPE"/>
    <property type="match status" value="1"/>
</dbReference>
<dbReference type="FunFam" id="1.20.20.10:FF:000010">
    <property type="entry name" value="ATP synthase subunit c"/>
    <property type="match status" value="1"/>
</dbReference>
<dbReference type="Gene3D" id="1.20.20.10">
    <property type="entry name" value="F1F0 ATP synthase subunit C"/>
    <property type="match status" value="1"/>
</dbReference>
<dbReference type="HAMAP" id="MF_01396">
    <property type="entry name" value="ATP_synth_c_bact"/>
    <property type="match status" value="1"/>
</dbReference>
<dbReference type="InterPro" id="IPR005953">
    <property type="entry name" value="ATP_synth_csu_bac/chlpt"/>
</dbReference>
<dbReference type="InterPro" id="IPR000454">
    <property type="entry name" value="ATP_synth_F0_csu"/>
</dbReference>
<dbReference type="InterPro" id="IPR020537">
    <property type="entry name" value="ATP_synth_F0_csu_DDCD_BS"/>
</dbReference>
<dbReference type="InterPro" id="IPR038662">
    <property type="entry name" value="ATP_synth_F0_csu_sf"/>
</dbReference>
<dbReference type="InterPro" id="IPR002379">
    <property type="entry name" value="ATPase_proteolipid_c-like_dom"/>
</dbReference>
<dbReference type="InterPro" id="IPR035921">
    <property type="entry name" value="F/V-ATP_Csub_sf"/>
</dbReference>
<dbReference type="NCBIfam" id="TIGR01260">
    <property type="entry name" value="ATP_synt_c"/>
    <property type="match status" value="1"/>
</dbReference>
<dbReference type="NCBIfam" id="NF004532">
    <property type="entry name" value="PRK05880.1"/>
    <property type="match status" value="1"/>
</dbReference>
<dbReference type="Pfam" id="PF00137">
    <property type="entry name" value="ATP-synt_C"/>
    <property type="match status" value="1"/>
</dbReference>
<dbReference type="PRINTS" id="PR00124">
    <property type="entry name" value="ATPASEC"/>
</dbReference>
<dbReference type="SUPFAM" id="SSF81333">
    <property type="entry name" value="F1F0 ATP synthase subunit C"/>
    <property type="match status" value="1"/>
</dbReference>
<dbReference type="PROSITE" id="PS00605">
    <property type="entry name" value="ATPASE_C"/>
    <property type="match status" value="1"/>
</dbReference>
<proteinExistence type="inferred from homology"/>
<gene>
    <name evidence="2" type="primary">atpE</name>
    <name type="ordered locus">BQ2027_MB1337</name>
</gene>
<accession>P63692</accession>
<accession>A0A1R3XXY7</accession>
<accession>Q10598</accession>
<accession>X2BHH4</accession>
<name>ATPL_MYCBO</name>
<comment type="function">
    <text evidence="2">F(1)F(0) ATP synthase produces ATP from ADP in the presence of a proton or sodium gradient. F-type ATPases consist of two structural domains, F(1) containing the extramembraneous catalytic core and F(0) containing the membrane proton channel, linked together by a central stalk and a peripheral stalk. During catalysis, ATP synthesis in the catalytic domain of F(1) is coupled via a rotary mechanism of the central stalk subunits to proton translocation.</text>
</comment>
<comment type="function">
    <text evidence="2">Key component of the F(0) channel; it plays a direct role in translocation across the membrane. A homomeric c-ring of between 10-14 subunits forms the central stalk rotor element with the F(1) delta and epsilon subunits.</text>
</comment>
<comment type="subunit">
    <text evidence="2">F-type ATPases have 2 components, F(1) - the catalytic core - and F(0) - the membrane proton channel. F(1) has five subunits: alpha(3), beta(3), gamma(1), delta(1), epsilon(1). F(0) has three main subunits: a(1), b(2) and c(10-14). The alpha and beta chains form an alternating ring which encloses part of the gamma chain. F(1) is attached to F(0) by a central stalk formed by the gamma and epsilon chains, while a peripheral stalk is formed by the delta and b chains.</text>
</comment>
<comment type="subcellular location">
    <subcellularLocation>
        <location evidence="2">Cell membrane</location>
        <topology evidence="2">Multi-pass membrane protein</topology>
    </subcellularLocation>
</comment>
<comment type="miscellaneous">
    <text evidence="1">Dicyclohexylcarbodiimide (DCDD) binding to the active glutamate residue inhibits ATPase in vitro.</text>
</comment>
<comment type="similarity">
    <text evidence="2">Belongs to the ATPase C chain family.</text>
</comment>
<sequence>MDPTIAAGALIGGGLIMAGGAIGAGIGDGVAGNALISGVARQPEAQGRLFTPFFITVGLVEAAYFINLAFMALFVFATPVK</sequence>
<protein>
    <recommendedName>
        <fullName evidence="2">ATP synthase subunit c</fullName>
    </recommendedName>
    <alternativeName>
        <fullName evidence="2">ATP synthase F(0) sector subunit c</fullName>
    </alternativeName>
    <alternativeName>
        <fullName evidence="2">F-type ATPase subunit c</fullName>
        <shortName evidence="2">F-ATPase subunit c</shortName>
    </alternativeName>
    <alternativeName>
        <fullName evidence="2">Lipid-binding protein</fullName>
    </alternativeName>
</protein>
<organism>
    <name type="scientific">Mycobacterium bovis (strain ATCC BAA-935 / AF2122/97)</name>
    <dbReference type="NCBI Taxonomy" id="233413"/>
    <lineage>
        <taxon>Bacteria</taxon>
        <taxon>Bacillati</taxon>
        <taxon>Actinomycetota</taxon>
        <taxon>Actinomycetes</taxon>
        <taxon>Mycobacteriales</taxon>
        <taxon>Mycobacteriaceae</taxon>
        <taxon>Mycobacterium</taxon>
        <taxon>Mycobacterium tuberculosis complex</taxon>
    </lineage>
</organism>
<feature type="chain" id="PRO_0000112156" description="ATP synthase subunit c">
    <location>
        <begin position="1"/>
        <end position="81"/>
    </location>
</feature>
<feature type="transmembrane region" description="Helical" evidence="2">
    <location>
        <begin position="5"/>
        <end position="25"/>
    </location>
</feature>
<feature type="transmembrane region" description="Helical" evidence="2">
    <location>
        <begin position="57"/>
        <end position="77"/>
    </location>
</feature>
<feature type="site" description="Reversibly protonated during proton transport" evidence="2">
    <location>
        <position position="61"/>
    </location>
</feature>
<evidence type="ECO:0000250" key="1"/>
<evidence type="ECO:0000255" key="2">
    <source>
        <dbReference type="HAMAP-Rule" id="MF_01396"/>
    </source>
</evidence>
<keyword id="KW-0066">ATP synthesis</keyword>
<keyword id="KW-1003">Cell membrane</keyword>
<keyword id="KW-0138">CF(0)</keyword>
<keyword id="KW-0375">Hydrogen ion transport</keyword>
<keyword id="KW-0406">Ion transport</keyword>
<keyword id="KW-0446">Lipid-binding</keyword>
<keyword id="KW-0472">Membrane</keyword>
<keyword id="KW-1185">Reference proteome</keyword>
<keyword id="KW-0812">Transmembrane</keyword>
<keyword id="KW-1133">Transmembrane helix</keyword>
<keyword id="KW-0813">Transport</keyword>
<reference key="1">
    <citation type="journal article" date="2003" name="Proc. Natl. Acad. Sci. U.S.A.">
        <title>The complete genome sequence of Mycobacterium bovis.</title>
        <authorList>
            <person name="Garnier T."/>
            <person name="Eiglmeier K."/>
            <person name="Camus J.-C."/>
            <person name="Medina N."/>
            <person name="Mansoor H."/>
            <person name="Pryor M."/>
            <person name="Duthoy S."/>
            <person name="Grondin S."/>
            <person name="Lacroix C."/>
            <person name="Monsempe C."/>
            <person name="Simon S."/>
            <person name="Harris B."/>
            <person name="Atkin R."/>
            <person name="Doggett J."/>
            <person name="Mayes R."/>
            <person name="Keating L."/>
            <person name="Wheeler P.R."/>
            <person name="Parkhill J."/>
            <person name="Barrell B.G."/>
            <person name="Cole S.T."/>
            <person name="Gordon S.V."/>
            <person name="Hewinson R.G."/>
        </authorList>
    </citation>
    <scope>NUCLEOTIDE SEQUENCE [LARGE SCALE GENOMIC DNA]</scope>
    <source>
        <strain>ATCC BAA-935 / AF2122/97</strain>
    </source>
</reference>
<reference key="2">
    <citation type="journal article" date="2017" name="Genome Announc.">
        <title>Updated reference genome sequence and annotation of Mycobacterium bovis AF2122/97.</title>
        <authorList>
            <person name="Malone K.M."/>
            <person name="Farrell D."/>
            <person name="Stuber T.P."/>
            <person name="Schubert O.T."/>
            <person name="Aebersold R."/>
            <person name="Robbe-Austerman S."/>
            <person name="Gordon S.V."/>
        </authorList>
    </citation>
    <scope>NUCLEOTIDE SEQUENCE [LARGE SCALE GENOMIC DNA]</scope>
    <scope>GENOME REANNOTATION</scope>
    <source>
        <strain>ATCC BAA-935 / AF2122/97</strain>
    </source>
</reference>